<comment type="function">
    <text evidence="1">Subunit of malonate decarboxylase, it is an acyl carrier protein to which acetyl and malonyl thioester residues are bound via a 2'-(5''-phosphoribosyl)-3'-dephospho-CoA prosthetic group and turn over during the catalytic mechanism.</text>
</comment>
<comment type="subcellular location">
    <subcellularLocation>
        <location evidence="1">Cytoplasm</location>
    </subcellularLocation>
</comment>
<comment type="PTM">
    <text evidence="1">Covalently binds the prosthetic group of malonate decarboxylase.</text>
</comment>
<comment type="similarity">
    <text evidence="1">Belongs to the MdcC family.</text>
</comment>
<name>MDCC_XANAC</name>
<protein>
    <recommendedName>
        <fullName evidence="1">Malonate decarboxylase acyl carrier protein</fullName>
    </recommendedName>
    <alternativeName>
        <fullName evidence="1">Malonate decarboxylase subunit delta</fullName>
    </alternativeName>
</protein>
<organism>
    <name type="scientific">Xanthomonas axonopodis pv. citri (strain 306)</name>
    <dbReference type="NCBI Taxonomy" id="190486"/>
    <lineage>
        <taxon>Bacteria</taxon>
        <taxon>Pseudomonadati</taxon>
        <taxon>Pseudomonadota</taxon>
        <taxon>Gammaproteobacteria</taxon>
        <taxon>Lysobacterales</taxon>
        <taxon>Lysobacteraceae</taxon>
        <taxon>Xanthomonas</taxon>
    </lineage>
</organism>
<gene>
    <name evidence="1" type="primary">mdcC</name>
    <name type="ordered locus">XAC0561</name>
</gene>
<evidence type="ECO:0000255" key="1">
    <source>
        <dbReference type="HAMAP-Rule" id="MF_00710"/>
    </source>
</evidence>
<feature type="chain" id="PRO_0000220290" description="Malonate decarboxylase acyl carrier protein">
    <location>
        <begin position="1"/>
        <end position="105"/>
    </location>
</feature>
<feature type="modified residue" description="O-(phosphoribosyl dephospho-coenzyme A)serine" evidence="1">
    <location>
        <position position="28"/>
    </location>
</feature>
<proteinExistence type="inferred from homology"/>
<sequence length="105" mass="11263">METLRYRFDGQRGARAGLEHALVGVVASGNLEVLVERVPLEGAMEIDILTAARGFGAIWQAVLDDFAARHPLRDVRISINDVGATPAVVSLRLEQALDVLQGADA</sequence>
<reference key="1">
    <citation type="journal article" date="2002" name="Nature">
        <title>Comparison of the genomes of two Xanthomonas pathogens with differing host specificities.</title>
        <authorList>
            <person name="da Silva A.C.R."/>
            <person name="Ferro J.A."/>
            <person name="Reinach F.C."/>
            <person name="Farah C.S."/>
            <person name="Furlan L.R."/>
            <person name="Quaggio R.B."/>
            <person name="Monteiro-Vitorello C.B."/>
            <person name="Van Sluys M.A."/>
            <person name="Almeida N.F. Jr."/>
            <person name="Alves L.M.C."/>
            <person name="do Amaral A.M."/>
            <person name="Bertolini M.C."/>
            <person name="Camargo L.E.A."/>
            <person name="Camarotte G."/>
            <person name="Cannavan F."/>
            <person name="Cardozo J."/>
            <person name="Chambergo F."/>
            <person name="Ciapina L.P."/>
            <person name="Cicarelli R.M.B."/>
            <person name="Coutinho L.L."/>
            <person name="Cursino-Santos J.R."/>
            <person name="El-Dorry H."/>
            <person name="Faria J.B."/>
            <person name="Ferreira A.J.S."/>
            <person name="Ferreira R.C.C."/>
            <person name="Ferro M.I.T."/>
            <person name="Formighieri E.F."/>
            <person name="Franco M.C."/>
            <person name="Greggio C.C."/>
            <person name="Gruber A."/>
            <person name="Katsuyama A.M."/>
            <person name="Kishi L.T."/>
            <person name="Leite R.P."/>
            <person name="Lemos E.G.M."/>
            <person name="Lemos M.V.F."/>
            <person name="Locali E.C."/>
            <person name="Machado M.A."/>
            <person name="Madeira A.M.B.N."/>
            <person name="Martinez-Rossi N.M."/>
            <person name="Martins E.C."/>
            <person name="Meidanis J."/>
            <person name="Menck C.F.M."/>
            <person name="Miyaki C.Y."/>
            <person name="Moon D.H."/>
            <person name="Moreira L.M."/>
            <person name="Novo M.T.M."/>
            <person name="Okura V.K."/>
            <person name="Oliveira M.C."/>
            <person name="Oliveira V.R."/>
            <person name="Pereira H.A."/>
            <person name="Rossi A."/>
            <person name="Sena J.A.D."/>
            <person name="Silva C."/>
            <person name="de Souza R.F."/>
            <person name="Spinola L.A.F."/>
            <person name="Takita M.A."/>
            <person name="Tamura R.E."/>
            <person name="Teixeira E.C."/>
            <person name="Tezza R.I.D."/>
            <person name="Trindade dos Santos M."/>
            <person name="Truffi D."/>
            <person name="Tsai S.M."/>
            <person name="White F.F."/>
            <person name="Setubal J.C."/>
            <person name="Kitajima J.P."/>
        </authorList>
    </citation>
    <scope>NUCLEOTIDE SEQUENCE [LARGE SCALE GENOMIC DNA]</scope>
    <source>
        <strain>306</strain>
    </source>
</reference>
<keyword id="KW-0963">Cytoplasm</keyword>
<keyword id="KW-0597">Phosphoprotein</keyword>
<accession>Q8PPX2</accession>
<dbReference type="EMBL" id="AE008923">
    <property type="protein sequence ID" value="AAM35450.1"/>
    <property type="molecule type" value="Genomic_DNA"/>
</dbReference>
<dbReference type="RefSeq" id="WP_005914105.1">
    <property type="nucleotide sequence ID" value="NC_003919.1"/>
</dbReference>
<dbReference type="SMR" id="Q8PPX2"/>
<dbReference type="GeneID" id="75151379"/>
<dbReference type="KEGG" id="xac:XAC0561"/>
<dbReference type="eggNOG" id="COG3052">
    <property type="taxonomic scope" value="Bacteria"/>
</dbReference>
<dbReference type="HOGENOM" id="CLU_173135_0_0_6"/>
<dbReference type="Proteomes" id="UP000000576">
    <property type="component" value="Chromosome"/>
</dbReference>
<dbReference type="GO" id="GO:0005737">
    <property type="term" value="C:cytoplasm"/>
    <property type="evidence" value="ECO:0007669"/>
    <property type="project" value="UniProtKB-SubCell"/>
</dbReference>
<dbReference type="GO" id="GO:0000036">
    <property type="term" value="F:acyl carrier activity"/>
    <property type="evidence" value="ECO:0007669"/>
    <property type="project" value="UniProtKB-UniRule"/>
</dbReference>
<dbReference type="HAMAP" id="MF_00710">
    <property type="entry name" value="Malonate_deCO2ase_dsu"/>
    <property type="match status" value="1"/>
</dbReference>
<dbReference type="InterPro" id="IPR023439">
    <property type="entry name" value="Mal_deCO2ase/Cit_lyase_ACP"/>
</dbReference>
<dbReference type="InterPro" id="IPR009662">
    <property type="entry name" value="Malonate_deCO2ase_dsu"/>
</dbReference>
<dbReference type="NCBIfam" id="TIGR03130">
    <property type="entry name" value="malonate_delta"/>
    <property type="match status" value="1"/>
</dbReference>
<dbReference type="Pfam" id="PF06857">
    <property type="entry name" value="ACP"/>
    <property type="match status" value="1"/>
</dbReference>